<protein>
    <recommendedName>
        <fullName evidence="1">NADH-quinone oxidoreductase subunit C</fullName>
        <ecNumber evidence="1">7.1.1.-</ecNumber>
    </recommendedName>
    <alternativeName>
        <fullName evidence="1">NADH dehydrogenase I subunit C</fullName>
    </alternativeName>
    <alternativeName>
        <fullName evidence="1">NDH-1 subunit C</fullName>
    </alternativeName>
</protein>
<feature type="chain" id="PRO_0000358184" description="NADH-quinone oxidoreductase subunit C">
    <location>
        <begin position="1"/>
        <end position="200"/>
    </location>
</feature>
<name>NUOC_CERS1</name>
<evidence type="ECO:0000255" key="1">
    <source>
        <dbReference type="HAMAP-Rule" id="MF_01357"/>
    </source>
</evidence>
<reference key="1">
    <citation type="submission" date="2007-02" db="EMBL/GenBank/DDBJ databases">
        <title>Complete sequence of chromosome 1 of Rhodobacter sphaeroides ATCC 17029.</title>
        <authorList>
            <person name="Copeland A."/>
            <person name="Lucas S."/>
            <person name="Lapidus A."/>
            <person name="Barry K."/>
            <person name="Detter J.C."/>
            <person name="Glavina del Rio T."/>
            <person name="Hammon N."/>
            <person name="Israni S."/>
            <person name="Dalin E."/>
            <person name="Tice H."/>
            <person name="Pitluck S."/>
            <person name="Kiss H."/>
            <person name="Brettin T."/>
            <person name="Bruce D."/>
            <person name="Han C."/>
            <person name="Tapia R."/>
            <person name="Gilna P."/>
            <person name="Schmutz J."/>
            <person name="Larimer F."/>
            <person name="Land M."/>
            <person name="Hauser L."/>
            <person name="Kyrpides N."/>
            <person name="Mikhailova N."/>
            <person name="Richardson P."/>
            <person name="Mackenzie C."/>
            <person name="Choudhary M."/>
            <person name="Donohue T.J."/>
            <person name="Kaplan S."/>
        </authorList>
    </citation>
    <scope>NUCLEOTIDE SEQUENCE [LARGE SCALE GENOMIC DNA]</scope>
    <source>
        <strain>ATCC 17029 / ATH 2.4.9</strain>
    </source>
</reference>
<accession>A3PIX0</accession>
<keyword id="KW-0997">Cell inner membrane</keyword>
<keyword id="KW-1003">Cell membrane</keyword>
<keyword id="KW-0472">Membrane</keyword>
<keyword id="KW-0520">NAD</keyword>
<keyword id="KW-0874">Quinone</keyword>
<keyword id="KW-1278">Translocase</keyword>
<keyword id="KW-0813">Transport</keyword>
<keyword id="KW-0830">Ubiquinone</keyword>
<organism>
    <name type="scientific">Cereibacter sphaeroides (strain ATCC 17029 / ATH 2.4.9)</name>
    <name type="common">Rhodobacter sphaeroides</name>
    <dbReference type="NCBI Taxonomy" id="349101"/>
    <lineage>
        <taxon>Bacteria</taxon>
        <taxon>Pseudomonadati</taxon>
        <taxon>Pseudomonadota</taxon>
        <taxon>Alphaproteobacteria</taxon>
        <taxon>Rhodobacterales</taxon>
        <taxon>Paracoccaceae</taxon>
        <taxon>Cereibacter</taxon>
    </lineage>
</organism>
<sequence length="200" mass="23431">MPEALQELAAHVRMRQPDAILGHRVEFGELTLDVVPNRIVGLVEFLRSDASCRFSSLVDITAIDHPERPARFDVVYHFLSMYQNQRIRLKMQVREDETVASIHSVHPSANWFEREVFDMFGILFTGHPDLRRILTDYGFRGHPMRKDFPTTGYTEVRYDEVQKRVVYEPVKLVQEYRQFDFLSPWEGADYILPGDDKART</sequence>
<comment type="function">
    <text evidence="1">NDH-1 shuttles electrons from NADH, via FMN and iron-sulfur (Fe-S) centers, to quinones in the respiratory chain. The immediate electron acceptor for the enzyme in this species is believed to be ubiquinone. Couples the redox reaction to proton translocation (for every two electrons transferred, four hydrogen ions are translocated across the cytoplasmic membrane), and thus conserves the redox energy in a proton gradient.</text>
</comment>
<comment type="catalytic activity">
    <reaction evidence="1">
        <text>a quinone + NADH + 5 H(+)(in) = a quinol + NAD(+) + 4 H(+)(out)</text>
        <dbReference type="Rhea" id="RHEA:57888"/>
        <dbReference type="ChEBI" id="CHEBI:15378"/>
        <dbReference type="ChEBI" id="CHEBI:24646"/>
        <dbReference type="ChEBI" id="CHEBI:57540"/>
        <dbReference type="ChEBI" id="CHEBI:57945"/>
        <dbReference type="ChEBI" id="CHEBI:132124"/>
    </reaction>
</comment>
<comment type="subunit">
    <text evidence="1">NDH-1 is composed of 14 different subunits. Subunits NuoB, C, D, E, F, and G constitute the peripheral sector of the complex.</text>
</comment>
<comment type="subcellular location">
    <subcellularLocation>
        <location evidence="1">Cell inner membrane</location>
        <topology evidence="1">Peripheral membrane protein</topology>
        <orientation evidence="1">Cytoplasmic side</orientation>
    </subcellularLocation>
</comment>
<comment type="similarity">
    <text evidence="1">Belongs to the complex I 30 kDa subunit family.</text>
</comment>
<proteinExistence type="inferred from homology"/>
<dbReference type="EC" id="7.1.1.-" evidence="1"/>
<dbReference type="EMBL" id="CP000577">
    <property type="protein sequence ID" value="ABN76286.1"/>
    <property type="molecule type" value="Genomic_DNA"/>
</dbReference>
<dbReference type="RefSeq" id="WP_011337546.1">
    <property type="nucleotide sequence ID" value="NC_009049.1"/>
</dbReference>
<dbReference type="SMR" id="A3PIX0"/>
<dbReference type="KEGG" id="rsh:Rsph17029_1176"/>
<dbReference type="HOGENOM" id="CLU_042628_2_1_5"/>
<dbReference type="GO" id="GO:0005886">
    <property type="term" value="C:plasma membrane"/>
    <property type="evidence" value="ECO:0007669"/>
    <property type="project" value="UniProtKB-SubCell"/>
</dbReference>
<dbReference type="GO" id="GO:0008137">
    <property type="term" value="F:NADH dehydrogenase (ubiquinone) activity"/>
    <property type="evidence" value="ECO:0007669"/>
    <property type="project" value="InterPro"/>
</dbReference>
<dbReference type="GO" id="GO:0050136">
    <property type="term" value="F:NADH:ubiquinone reductase (non-electrogenic) activity"/>
    <property type="evidence" value="ECO:0007669"/>
    <property type="project" value="UniProtKB-UniRule"/>
</dbReference>
<dbReference type="GO" id="GO:0048038">
    <property type="term" value="F:quinone binding"/>
    <property type="evidence" value="ECO:0007669"/>
    <property type="project" value="UniProtKB-KW"/>
</dbReference>
<dbReference type="Gene3D" id="3.30.460.80">
    <property type="entry name" value="NADH:ubiquinone oxidoreductase, 30kDa subunit"/>
    <property type="match status" value="1"/>
</dbReference>
<dbReference type="HAMAP" id="MF_01357">
    <property type="entry name" value="NDH1_NuoC"/>
    <property type="match status" value="1"/>
</dbReference>
<dbReference type="InterPro" id="IPR010218">
    <property type="entry name" value="NADH_DH_suC"/>
</dbReference>
<dbReference type="InterPro" id="IPR037232">
    <property type="entry name" value="NADH_quin_OxRdtase_su_C/D-like"/>
</dbReference>
<dbReference type="InterPro" id="IPR001268">
    <property type="entry name" value="NADH_UbQ_OxRdtase_30kDa_su"/>
</dbReference>
<dbReference type="InterPro" id="IPR020396">
    <property type="entry name" value="NADH_UbQ_OxRdtase_CS"/>
</dbReference>
<dbReference type="NCBIfam" id="TIGR01961">
    <property type="entry name" value="NuoC_fam"/>
    <property type="match status" value="1"/>
</dbReference>
<dbReference type="NCBIfam" id="NF004733">
    <property type="entry name" value="PRK06074.1-5"/>
    <property type="match status" value="1"/>
</dbReference>
<dbReference type="PANTHER" id="PTHR10884:SF14">
    <property type="entry name" value="NADH DEHYDROGENASE [UBIQUINONE] IRON-SULFUR PROTEIN 3, MITOCHONDRIAL"/>
    <property type="match status" value="1"/>
</dbReference>
<dbReference type="PANTHER" id="PTHR10884">
    <property type="entry name" value="NADH DEHYDROGENASE UBIQUINONE IRON-SULFUR PROTEIN 3"/>
    <property type="match status" value="1"/>
</dbReference>
<dbReference type="Pfam" id="PF00329">
    <property type="entry name" value="Complex1_30kDa"/>
    <property type="match status" value="1"/>
</dbReference>
<dbReference type="SUPFAM" id="SSF143243">
    <property type="entry name" value="Nqo5-like"/>
    <property type="match status" value="1"/>
</dbReference>
<dbReference type="PROSITE" id="PS00542">
    <property type="entry name" value="COMPLEX1_30K"/>
    <property type="match status" value="1"/>
</dbReference>
<gene>
    <name evidence="1" type="primary">nuoC</name>
    <name type="ordered locus">Rsph17029_1176</name>
</gene>